<dbReference type="EMBL" id="AL935263">
    <property type="protein sequence ID" value="CCC78754.1"/>
    <property type="molecule type" value="Genomic_DNA"/>
</dbReference>
<dbReference type="RefSeq" id="WP_011101395.1">
    <property type="nucleotide sequence ID" value="NC_004567.2"/>
</dbReference>
<dbReference type="RefSeq" id="YP_004889268.1">
    <property type="nucleotide sequence ID" value="NC_004567.2"/>
</dbReference>
<dbReference type="SMR" id="Q88X33"/>
<dbReference type="STRING" id="220668.lp_1415"/>
<dbReference type="EnsemblBacteria" id="CCC78754">
    <property type="protein sequence ID" value="CCC78754"/>
    <property type="gene ID" value="lp_1415"/>
</dbReference>
<dbReference type="KEGG" id="lpl:lp_1415"/>
<dbReference type="PATRIC" id="fig|220668.9.peg.1186"/>
<dbReference type="eggNOG" id="COG3679">
    <property type="taxonomic scope" value="Bacteria"/>
</dbReference>
<dbReference type="HOGENOM" id="CLU_140243_3_1_9"/>
<dbReference type="OrthoDB" id="9811402at2"/>
<dbReference type="PhylomeDB" id="Q88X33"/>
<dbReference type="Proteomes" id="UP000000432">
    <property type="component" value="Chromosome"/>
</dbReference>
<dbReference type="Gene3D" id="1.20.1500.10">
    <property type="entry name" value="YheA/YmcA-like"/>
    <property type="match status" value="1"/>
</dbReference>
<dbReference type="HAMAP" id="MF_01526">
    <property type="entry name" value="UPF0342"/>
    <property type="match status" value="1"/>
</dbReference>
<dbReference type="InterPro" id="IPR010368">
    <property type="entry name" value="Com_YlbF"/>
</dbReference>
<dbReference type="InterPro" id="IPR023378">
    <property type="entry name" value="YheA/YmcA-like_dom_sf"/>
</dbReference>
<dbReference type="Pfam" id="PF06133">
    <property type="entry name" value="Com_YlbF"/>
    <property type="match status" value="1"/>
</dbReference>
<dbReference type="SUPFAM" id="SSF158622">
    <property type="entry name" value="YheA/YmcA-like"/>
    <property type="match status" value="1"/>
</dbReference>
<proteinExistence type="inferred from homology"/>
<protein>
    <recommendedName>
        <fullName evidence="1">UPF0342 protein lp_1415</fullName>
    </recommendedName>
</protein>
<name>Y1415_LACPL</name>
<reference key="1">
    <citation type="journal article" date="2003" name="Proc. Natl. Acad. Sci. U.S.A.">
        <title>Complete genome sequence of Lactobacillus plantarum WCFS1.</title>
        <authorList>
            <person name="Kleerebezem M."/>
            <person name="Boekhorst J."/>
            <person name="van Kranenburg R."/>
            <person name="Molenaar D."/>
            <person name="Kuipers O.P."/>
            <person name="Leer R."/>
            <person name="Tarchini R."/>
            <person name="Peters S.A."/>
            <person name="Sandbrink H.M."/>
            <person name="Fiers M.W.E.J."/>
            <person name="Stiekema W."/>
            <person name="Klein Lankhorst R.M."/>
            <person name="Bron P.A."/>
            <person name="Hoffer S.M."/>
            <person name="Nierop Groot M.N."/>
            <person name="Kerkhoven R."/>
            <person name="De Vries M."/>
            <person name="Ursing B."/>
            <person name="De Vos W.M."/>
            <person name="Siezen R.J."/>
        </authorList>
    </citation>
    <scope>NUCLEOTIDE SEQUENCE [LARGE SCALE GENOMIC DNA]</scope>
    <source>
        <strain>ATCC BAA-793 / NCIMB 8826 / WCFS1</strain>
    </source>
</reference>
<reference key="2">
    <citation type="journal article" date="2012" name="J. Bacteriol.">
        <title>Complete resequencing and reannotation of the Lactobacillus plantarum WCFS1 genome.</title>
        <authorList>
            <person name="Siezen R.J."/>
            <person name="Francke C."/>
            <person name="Renckens B."/>
            <person name="Boekhorst J."/>
            <person name="Wels M."/>
            <person name="Kleerebezem M."/>
            <person name="van Hijum S.A."/>
        </authorList>
    </citation>
    <scope>NUCLEOTIDE SEQUENCE [LARGE SCALE GENOMIC DNA]</scope>
    <scope>GENOME REANNOTATION</scope>
    <source>
        <strain>ATCC BAA-793 / NCIMB 8826 / WCFS1</strain>
    </source>
</reference>
<evidence type="ECO:0000255" key="1">
    <source>
        <dbReference type="HAMAP-Rule" id="MF_01526"/>
    </source>
</evidence>
<gene>
    <name type="ordered locus">lp_1415</name>
</gene>
<sequence>MAVNIYDTANQLEQELRQTKEFKELKVAYDTMKTNDSAFSLFKDFQEVQMQLSQKQMNGEELTDDEVQKAHDLADKVGNVDEIKSLMGKERNLNQLMNDLNQIITKPVQALYQN</sequence>
<keyword id="KW-1185">Reference proteome</keyword>
<feature type="chain" id="PRO_0000109978" description="UPF0342 protein lp_1415">
    <location>
        <begin position="1"/>
        <end position="114"/>
    </location>
</feature>
<organism>
    <name type="scientific">Lactiplantibacillus plantarum (strain ATCC BAA-793 / NCIMB 8826 / WCFS1)</name>
    <name type="common">Lactobacillus plantarum</name>
    <dbReference type="NCBI Taxonomy" id="220668"/>
    <lineage>
        <taxon>Bacteria</taxon>
        <taxon>Bacillati</taxon>
        <taxon>Bacillota</taxon>
        <taxon>Bacilli</taxon>
        <taxon>Lactobacillales</taxon>
        <taxon>Lactobacillaceae</taxon>
        <taxon>Lactiplantibacillus</taxon>
    </lineage>
</organism>
<accession>Q88X33</accession>
<accession>F9UNG5</accession>
<comment type="similarity">
    <text evidence="1">Belongs to the UPF0342 family.</text>
</comment>